<reference key="1">
    <citation type="journal article" date="1985" name="Virology">
        <title>Structural homologies between RNA gene segments 10 and 11 from UK bovine, simian SA11, and human Wa rotaviruses.</title>
        <authorList>
            <person name="Ward C.W."/>
            <person name="Azad A.A."/>
            <person name="Dyall-Smith M.L."/>
        </authorList>
    </citation>
    <scope>NUCLEOTIDE SEQUENCE [GENOMIC RNA]</scope>
</reference>
<reference key="2">
    <citation type="journal article" date="2007" name="Virus Res.">
        <title>Characterization of the NSP6 protein product of rotavirus gene 11.</title>
        <authorList>
            <person name="Rainsford E.W."/>
            <person name="McCrae M.A."/>
        </authorList>
    </citation>
    <scope>CHARACTERIZATION</scope>
    <scope>SUBCELLULAR LOCATION</scope>
</reference>
<protein>
    <recommendedName>
        <fullName evidence="1">Non-structural protein 6</fullName>
        <shortName evidence="1">NSP6</shortName>
    </recommendedName>
</protein>
<organismHost>
    <name type="scientific">Bos taurus</name>
    <name type="common">Bovine</name>
    <dbReference type="NCBI Taxonomy" id="9913"/>
</organismHost>
<name>NSP6_ROTBU</name>
<feature type="chain" id="PRO_0000369514" description="Non-structural protein 6">
    <location>
        <begin position="1"/>
        <end position="98"/>
    </location>
</feature>
<accession>P0C6Z2</accession>
<keyword id="KW-1035">Host cytoplasm</keyword>
<keyword id="KW-1045">Host mitochondrion</keyword>
<organism>
    <name type="scientific">Rotavirus A (strain RVA/Cow/United Kingdom/UK/1975/G6P7[5])</name>
    <name type="common">RV-A</name>
    <dbReference type="NCBI Taxonomy" id="10934"/>
    <lineage>
        <taxon>Viruses</taxon>
        <taxon>Riboviria</taxon>
        <taxon>Orthornavirae</taxon>
        <taxon>Duplornaviricota</taxon>
        <taxon>Resentoviricetes</taxon>
        <taxon>Reovirales</taxon>
        <taxon>Sedoreoviridae</taxon>
        <taxon>Rotavirus</taxon>
        <taxon>Rotavirus A</taxon>
    </lineage>
</organism>
<proteinExistence type="evidence at protein level"/>
<comment type="subunit">
    <text evidence="1">Interacts with NSP2 and NSP5.</text>
</comment>
<comment type="subcellular location">
    <subcellularLocation>
        <location evidence="1 2">Host cytoplasm</location>
    </subcellularLocation>
    <subcellularLocation>
        <location evidence="1">Host mitochondrion</location>
    </subcellularLocation>
    <text evidence="1">Found in spherical cytoplasmic structures, called viral factories, that appear early after infection and are the site of viral replication and packaging.</text>
</comment>
<comment type="similarity">
    <text evidence="1">Belongs to the rotavirus A NSP6 family.</text>
</comment>
<sequence>MNHLQQRQLFLENLLVGVNNMFHQMQKRPVNTCCRSLQKILDHLILLQTIHSPAFRLDQMQLRQMQTLACLWIHQYNHDHQVTLGAIKWISPLIKELK</sequence>
<dbReference type="EMBL" id="K03385">
    <property type="status" value="NOT_ANNOTATED_CDS"/>
    <property type="molecule type" value="Genomic_RNA"/>
</dbReference>
<dbReference type="SMR" id="P0C6Z2"/>
<dbReference type="Proteomes" id="UP000008657">
    <property type="component" value="Genome"/>
</dbReference>
<dbReference type="GO" id="GO:0033650">
    <property type="term" value="C:host cell mitochondrion"/>
    <property type="evidence" value="ECO:0007669"/>
    <property type="project" value="UniProtKB-SubCell"/>
</dbReference>
<dbReference type="HAMAP" id="MF_04093">
    <property type="entry name" value="ROTA_NSP6"/>
    <property type="match status" value="1"/>
</dbReference>
<dbReference type="InterPro" id="IPR006950">
    <property type="entry name" value="Rotavirus_NSP6"/>
</dbReference>
<dbReference type="Pfam" id="PF04866">
    <property type="entry name" value="Rota_NS6"/>
    <property type="match status" value="1"/>
</dbReference>
<evidence type="ECO:0000255" key="1">
    <source>
        <dbReference type="HAMAP-Rule" id="MF_04093"/>
    </source>
</evidence>
<evidence type="ECO:0000269" key="2">
    <source>
    </source>
</evidence>